<name>NAGZ_NEIG1</name>
<feature type="chain" id="PRO_0000234917" description="Beta-hexosaminidase">
    <location>
        <begin position="1"/>
        <end position="361"/>
    </location>
</feature>
<feature type="active site" description="Proton donor/acceptor" evidence="1">
    <location>
        <position position="187"/>
    </location>
</feature>
<feature type="active site" description="Nucleophile" evidence="1">
    <location>
        <position position="258"/>
    </location>
</feature>
<feature type="binding site" evidence="1">
    <location>
        <position position="69"/>
    </location>
    <ligand>
        <name>substrate</name>
    </ligand>
</feature>
<feature type="binding site" evidence="1">
    <location>
        <position position="77"/>
    </location>
    <ligand>
        <name>substrate</name>
    </ligand>
</feature>
<feature type="binding site" evidence="1">
    <location>
        <position position="144"/>
    </location>
    <ligand>
        <name>substrate</name>
    </ligand>
</feature>
<feature type="binding site" evidence="1">
    <location>
        <begin position="174"/>
        <end position="175"/>
    </location>
    <ligand>
        <name>substrate</name>
    </ligand>
</feature>
<feature type="site" description="Important for catalytic activity" evidence="1">
    <location>
        <position position="185"/>
    </location>
</feature>
<feature type="strand" evidence="2">
    <location>
        <begin position="10"/>
        <end position="13"/>
    </location>
</feature>
<feature type="strand" evidence="2">
    <location>
        <begin position="16"/>
        <end position="19"/>
    </location>
</feature>
<feature type="helix" evidence="2">
    <location>
        <begin position="22"/>
        <end position="28"/>
    </location>
</feature>
<feature type="strand" evidence="2">
    <location>
        <begin position="33"/>
        <end position="38"/>
    </location>
</feature>
<feature type="helix" evidence="2">
    <location>
        <begin position="40"/>
        <end position="42"/>
    </location>
</feature>
<feature type="helix" evidence="2">
    <location>
        <begin position="46"/>
        <end position="58"/>
    </location>
</feature>
<feature type="strand" evidence="2">
    <location>
        <begin position="60"/>
        <end position="62"/>
    </location>
</feature>
<feature type="strand" evidence="2">
    <location>
        <begin position="65"/>
        <end position="68"/>
    </location>
</feature>
<feature type="strand" evidence="2">
    <location>
        <begin position="70"/>
        <end position="72"/>
    </location>
</feature>
<feature type="strand" evidence="2">
    <location>
        <begin position="75"/>
        <end position="77"/>
    </location>
</feature>
<feature type="helix" evidence="2">
    <location>
        <begin position="88"/>
        <end position="98"/>
    </location>
</feature>
<feature type="helix" evidence="2">
    <location>
        <begin position="100"/>
        <end position="119"/>
    </location>
</feature>
<feature type="turn" evidence="2">
    <location>
        <begin position="120"/>
        <end position="122"/>
    </location>
</feature>
<feature type="turn" evidence="2">
    <location>
        <begin position="139"/>
        <end position="141"/>
    </location>
</feature>
<feature type="helix" evidence="2">
    <location>
        <begin position="142"/>
        <end position="144"/>
    </location>
</feature>
<feature type="helix" evidence="2">
    <location>
        <begin position="150"/>
        <end position="166"/>
    </location>
</feature>
<feature type="strand" evidence="2">
    <location>
        <begin position="172"/>
        <end position="176"/>
    </location>
</feature>
<feature type="strand" evidence="2">
    <location>
        <begin position="180"/>
        <end position="182"/>
    </location>
</feature>
<feature type="strand" evidence="2">
    <location>
        <begin position="186"/>
        <end position="188"/>
    </location>
</feature>
<feature type="helix" evidence="2">
    <location>
        <begin position="197"/>
        <end position="202"/>
    </location>
</feature>
<feature type="turn" evidence="2">
    <location>
        <begin position="203"/>
        <end position="205"/>
    </location>
</feature>
<feature type="helix" evidence="2">
    <location>
        <begin position="206"/>
        <end position="213"/>
    </location>
</feature>
<feature type="strand" evidence="2">
    <location>
        <begin position="218"/>
        <end position="221"/>
    </location>
</feature>
<feature type="turn" evidence="2">
    <location>
        <begin position="227"/>
        <end position="229"/>
    </location>
</feature>
<feature type="strand" evidence="2">
    <location>
        <begin position="230"/>
        <end position="233"/>
    </location>
</feature>
<feature type="helix" evidence="2">
    <location>
        <begin position="234"/>
        <end position="236"/>
    </location>
</feature>
<feature type="helix" evidence="2">
    <location>
        <begin position="238"/>
        <end position="241"/>
    </location>
</feature>
<feature type="helix" evidence="2">
    <location>
        <begin position="242"/>
        <end position="248"/>
    </location>
</feature>
<feature type="strand" evidence="2">
    <location>
        <begin position="253"/>
        <end position="259"/>
    </location>
</feature>
<feature type="turn" evidence="2">
    <location>
        <begin position="262"/>
        <end position="266"/>
    </location>
</feature>
<feature type="helix" evidence="2">
    <location>
        <begin position="271"/>
        <end position="281"/>
    </location>
</feature>
<feature type="strand" evidence="2">
    <location>
        <begin position="284"/>
        <end position="287"/>
    </location>
</feature>
<feature type="helix" evidence="2">
    <location>
        <begin position="292"/>
        <end position="299"/>
    </location>
</feature>
<feature type="helix" evidence="2">
    <location>
        <begin position="310"/>
        <end position="316"/>
    </location>
</feature>
<feature type="helix" evidence="2">
    <location>
        <begin position="323"/>
        <end position="331"/>
    </location>
</feature>
<feature type="helix" evidence="2">
    <location>
        <begin position="333"/>
        <end position="346"/>
    </location>
</feature>
<comment type="function">
    <text evidence="1">Plays a role in peptidoglycan recycling by cleaving the terminal beta-1,4-linked N-acetylglucosamine (GlcNAc) from peptide-linked peptidoglycan fragments, giving rise to free GlcNAc, anhydro-N-acetylmuramic acid and anhydro-N-acetylmuramic acid-linked peptides.</text>
</comment>
<comment type="catalytic activity">
    <reaction evidence="1">
        <text>Hydrolysis of terminal non-reducing N-acetyl-D-hexosamine residues in N-acetyl-beta-D-hexosaminides.</text>
        <dbReference type="EC" id="3.2.1.52"/>
    </reaction>
</comment>
<comment type="pathway">
    <text evidence="1">Cell wall biogenesis; peptidoglycan recycling.</text>
</comment>
<comment type="subcellular location">
    <subcellularLocation>
        <location evidence="1">Cytoplasm</location>
    </subcellularLocation>
</comment>
<comment type="similarity">
    <text evidence="1">Belongs to the glycosyl hydrolase 3 family. NagZ subfamily.</text>
</comment>
<gene>
    <name evidence="1" type="primary">nagZ</name>
    <name type="ordered locus">NGO_0135</name>
</gene>
<dbReference type="EC" id="3.2.1.52" evidence="1"/>
<dbReference type="EMBL" id="AE004969">
    <property type="protein sequence ID" value="AAW88893.1"/>
    <property type="molecule type" value="Genomic_DNA"/>
</dbReference>
<dbReference type="RefSeq" id="WP_003704881.1">
    <property type="nucleotide sequence ID" value="NC_002946.2"/>
</dbReference>
<dbReference type="RefSeq" id="YP_207305.1">
    <property type="nucleotide sequence ID" value="NC_002946.2"/>
</dbReference>
<dbReference type="PDB" id="6JTI">
    <property type="method" value="X-ray"/>
    <property type="resolution" value="2.20 A"/>
    <property type="chains" value="A/B/C/D/E/F=1-361"/>
</dbReference>
<dbReference type="PDB" id="6JTJ">
    <property type="method" value="X-ray"/>
    <property type="resolution" value="2.18 A"/>
    <property type="chains" value="A/B/C/D/E/F=1-361"/>
</dbReference>
<dbReference type="PDB" id="6JTK">
    <property type="method" value="X-ray"/>
    <property type="resolution" value="2.20 A"/>
    <property type="chains" value="A/B/C/D/E/F=1-361"/>
</dbReference>
<dbReference type="PDB" id="6JTL">
    <property type="method" value="X-ray"/>
    <property type="resolution" value="2.40 A"/>
    <property type="chains" value="A/B=1-361"/>
</dbReference>
<dbReference type="PDBsum" id="6JTI"/>
<dbReference type="PDBsum" id="6JTJ"/>
<dbReference type="PDBsum" id="6JTK"/>
<dbReference type="PDBsum" id="6JTL"/>
<dbReference type="SMR" id="Q5FA94"/>
<dbReference type="STRING" id="242231.NGO_0135"/>
<dbReference type="CAZy" id="GH3">
    <property type="family name" value="Glycoside Hydrolase Family 3"/>
</dbReference>
<dbReference type="KEGG" id="ngo:NGO_0135"/>
<dbReference type="PATRIC" id="fig|242231.10.peg.173"/>
<dbReference type="HOGENOM" id="CLU_008392_0_0_4"/>
<dbReference type="UniPathway" id="UPA00544"/>
<dbReference type="Proteomes" id="UP000000535">
    <property type="component" value="Chromosome"/>
</dbReference>
<dbReference type="GO" id="GO:0005737">
    <property type="term" value="C:cytoplasm"/>
    <property type="evidence" value="ECO:0007669"/>
    <property type="project" value="UniProtKB-SubCell"/>
</dbReference>
<dbReference type="GO" id="GO:0004563">
    <property type="term" value="F:beta-N-acetylhexosaminidase activity"/>
    <property type="evidence" value="ECO:0007669"/>
    <property type="project" value="UniProtKB-UniRule"/>
</dbReference>
<dbReference type="GO" id="GO:0005975">
    <property type="term" value="P:carbohydrate metabolic process"/>
    <property type="evidence" value="ECO:0007669"/>
    <property type="project" value="InterPro"/>
</dbReference>
<dbReference type="GO" id="GO:0051301">
    <property type="term" value="P:cell division"/>
    <property type="evidence" value="ECO:0007669"/>
    <property type="project" value="UniProtKB-KW"/>
</dbReference>
<dbReference type="GO" id="GO:0071555">
    <property type="term" value="P:cell wall organization"/>
    <property type="evidence" value="ECO:0007669"/>
    <property type="project" value="UniProtKB-KW"/>
</dbReference>
<dbReference type="GO" id="GO:0009252">
    <property type="term" value="P:peptidoglycan biosynthetic process"/>
    <property type="evidence" value="ECO:0007669"/>
    <property type="project" value="UniProtKB-KW"/>
</dbReference>
<dbReference type="GO" id="GO:0009254">
    <property type="term" value="P:peptidoglycan turnover"/>
    <property type="evidence" value="ECO:0007669"/>
    <property type="project" value="UniProtKB-UniRule"/>
</dbReference>
<dbReference type="GO" id="GO:0008360">
    <property type="term" value="P:regulation of cell shape"/>
    <property type="evidence" value="ECO:0007669"/>
    <property type="project" value="UniProtKB-KW"/>
</dbReference>
<dbReference type="FunFam" id="3.20.20.300:FF:000001">
    <property type="entry name" value="Beta-hexosaminidase"/>
    <property type="match status" value="1"/>
</dbReference>
<dbReference type="Gene3D" id="3.20.20.300">
    <property type="entry name" value="Glycoside hydrolase, family 3, N-terminal domain"/>
    <property type="match status" value="1"/>
</dbReference>
<dbReference type="HAMAP" id="MF_00364">
    <property type="entry name" value="NagZ"/>
    <property type="match status" value="1"/>
</dbReference>
<dbReference type="InterPro" id="IPR022956">
    <property type="entry name" value="Beta_hexosaminidase_bac"/>
</dbReference>
<dbReference type="InterPro" id="IPR019800">
    <property type="entry name" value="Glyco_hydro_3_AS"/>
</dbReference>
<dbReference type="InterPro" id="IPR001764">
    <property type="entry name" value="Glyco_hydro_3_N"/>
</dbReference>
<dbReference type="InterPro" id="IPR036962">
    <property type="entry name" value="Glyco_hydro_3_N_sf"/>
</dbReference>
<dbReference type="InterPro" id="IPR017853">
    <property type="entry name" value="Glycoside_hydrolase_SF"/>
</dbReference>
<dbReference type="InterPro" id="IPR050226">
    <property type="entry name" value="NagZ_Beta-hexosaminidase"/>
</dbReference>
<dbReference type="NCBIfam" id="NF003740">
    <property type="entry name" value="PRK05337.1"/>
    <property type="match status" value="1"/>
</dbReference>
<dbReference type="PANTHER" id="PTHR30480:SF13">
    <property type="entry name" value="BETA-HEXOSAMINIDASE"/>
    <property type="match status" value="1"/>
</dbReference>
<dbReference type="PANTHER" id="PTHR30480">
    <property type="entry name" value="BETA-HEXOSAMINIDASE-RELATED"/>
    <property type="match status" value="1"/>
</dbReference>
<dbReference type="Pfam" id="PF00933">
    <property type="entry name" value="Glyco_hydro_3"/>
    <property type="match status" value="1"/>
</dbReference>
<dbReference type="SUPFAM" id="SSF51445">
    <property type="entry name" value="(Trans)glycosidases"/>
    <property type="match status" value="1"/>
</dbReference>
<dbReference type="PROSITE" id="PS00775">
    <property type="entry name" value="GLYCOSYL_HYDROL_F3"/>
    <property type="match status" value="1"/>
</dbReference>
<accession>Q5FA94</accession>
<protein>
    <recommendedName>
        <fullName evidence="1">Beta-hexosaminidase</fullName>
        <ecNumber evidence="1">3.2.1.52</ecNumber>
    </recommendedName>
    <alternativeName>
        <fullName evidence="1">Beta-N-acetylhexosaminidase</fullName>
    </alternativeName>
    <alternativeName>
        <fullName evidence="1">N-acetyl-beta-glucosaminidase</fullName>
    </alternativeName>
</protein>
<evidence type="ECO:0000255" key="1">
    <source>
        <dbReference type="HAMAP-Rule" id="MF_00364"/>
    </source>
</evidence>
<evidence type="ECO:0007829" key="2">
    <source>
        <dbReference type="PDB" id="6JTJ"/>
    </source>
</evidence>
<organism>
    <name type="scientific">Neisseria gonorrhoeae (strain ATCC 700825 / FA 1090)</name>
    <dbReference type="NCBI Taxonomy" id="242231"/>
    <lineage>
        <taxon>Bacteria</taxon>
        <taxon>Pseudomonadati</taxon>
        <taxon>Pseudomonadota</taxon>
        <taxon>Betaproteobacteria</taxon>
        <taxon>Neisseriales</taxon>
        <taxon>Neisseriaceae</taxon>
        <taxon>Neisseria</taxon>
    </lineage>
</organism>
<keyword id="KW-0002">3D-structure</keyword>
<keyword id="KW-0131">Cell cycle</keyword>
<keyword id="KW-0132">Cell division</keyword>
<keyword id="KW-0133">Cell shape</keyword>
<keyword id="KW-0961">Cell wall biogenesis/degradation</keyword>
<keyword id="KW-0963">Cytoplasm</keyword>
<keyword id="KW-0326">Glycosidase</keyword>
<keyword id="KW-0378">Hydrolase</keyword>
<keyword id="KW-0573">Peptidoglycan synthesis</keyword>
<keyword id="KW-1185">Reference proteome</keyword>
<sequence length="361" mass="39033">MTVPHIPRGPVMADIAAFRLTEEEKQRLLDPAIGGIILFRRNFQNIEQLKTLTAEIKALRTPELIIAVDHEGGRVQRFIEGFTRLPAMNVLGQIWDKDGASAAETAAGQVGRVLATELSACGIDLSFTPVLDLDWGNCAVIGNRSFHRNPEAVARLALALQKGLAKGGMKSCGKHFPGHGFVEGDSHLVLPEDGRSLDELEAADLAPFRIMSREGMAAVMPAHVVYPQVDTKPAGFSEIWLKQILRRDIGFKGVIFSDDLTMEGACGAGGIKERARISFEAGCDIVLVCNRPDLVDELRDGFTIPDNQDLAGRWQYMENSLGHEAVQAVMQTMGFQAAQAFVAGLASPQDTAGGVKVGEAF</sequence>
<reference key="1">
    <citation type="submission" date="2003-03" db="EMBL/GenBank/DDBJ databases">
        <title>The complete genome sequence of Neisseria gonorrhoeae.</title>
        <authorList>
            <person name="Lewis L.A."/>
            <person name="Gillaspy A.F."/>
            <person name="McLaughlin R.E."/>
            <person name="Gipson M."/>
            <person name="Ducey T.F."/>
            <person name="Ownbey T."/>
            <person name="Hartman K."/>
            <person name="Nydick C."/>
            <person name="Carson M.B."/>
            <person name="Vaughn J."/>
            <person name="Thomson C."/>
            <person name="Song L."/>
            <person name="Lin S."/>
            <person name="Yuan X."/>
            <person name="Najar F."/>
            <person name="Zhan M."/>
            <person name="Ren Q."/>
            <person name="Zhu H."/>
            <person name="Qi S."/>
            <person name="Kenton S.M."/>
            <person name="Lai H."/>
            <person name="White J.D."/>
            <person name="Clifton S."/>
            <person name="Roe B.A."/>
            <person name="Dyer D.W."/>
        </authorList>
    </citation>
    <scope>NUCLEOTIDE SEQUENCE [LARGE SCALE GENOMIC DNA]</scope>
    <source>
        <strain>ATCC 700825 / FA 1090</strain>
    </source>
</reference>
<proteinExistence type="evidence at protein level"/>